<protein>
    <recommendedName>
        <fullName evidence="1">Catalase-peroxidase 2</fullName>
        <shortName evidence="1">CP 2</shortName>
        <ecNumber evidence="1">1.11.1.21</ecNumber>
    </recommendedName>
    <alternativeName>
        <fullName evidence="1">Peroxidase/catalase 2</fullName>
    </alternativeName>
</protein>
<organism>
    <name type="scientific">Burkholderia ambifaria (strain ATCC BAA-244 / DSM 16087 / CCUG 44356 / LMG 19182 / AMMD)</name>
    <name type="common">Burkholderia cepacia (strain AMMD)</name>
    <dbReference type="NCBI Taxonomy" id="339670"/>
    <lineage>
        <taxon>Bacteria</taxon>
        <taxon>Pseudomonadati</taxon>
        <taxon>Pseudomonadota</taxon>
        <taxon>Betaproteobacteria</taxon>
        <taxon>Burkholderiales</taxon>
        <taxon>Burkholderiaceae</taxon>
        <taxon>Burkholderia</taxon>
        <taxon>Burkholderia cepacia complex</taxon>
    </lineage>
</organism>
<evidence type="ECO:0000255" key="1">
    <source>
        <dbReference type="HAMAP-Rule" id="MF_01961"/>
    </source>
</evidence>
<gene>
    <name evidence="1" type="primary">katG2</name>
    <name type="ordered locus">Bamb_5842</name>
</gene>
<feature type="signal peptide" evidence="1">
    <location>
        <begin position="1"/>
        <end position="28"/>
    </location>
</feature>
<feature type="chain" id="PRO_5000128247" description="Catalase-peroxidase 2">
    <location>
        <begin position="29"/>
        <end position="741"/>
    </location>
</feature>
<feature type="active site" description="Proton acceptor" evidence="1">
    <location>
        <position position="108"/>
    </location>
</feature>
<feature type="binding site" description="axial binding residue" evidence="1">
    <location>
        <position position="269"/>
    </location>
    <ligand>
        <name>heme b</name>
        <dbReference type="ChEBI" id="CHEBI:60344"/>
    </ligand>
    <ligandPart>
        <name>Fe</name>
        <dbReference type="ChEBI" id="CHEBI:18248"/>
    </ligandPart>
</feature>
<feature type="site" description="Transition state stabilizer" evidence="1">
    <location>
        <position position="104"/>
    </location>
</feature>
<feature type="cross-link" description="Tryptophyl-tyrosyl-methioninium (Trp-Tyr) (with M-254)" evidence="1">
    <location>
        <begin position="107"/>
        <end position="228"/>
    </location>
</feature>
<feature type="cross-link" description="Tryptophyl-tyrosyl-methioninium (Tyr-Met) (with W-107)" evidence="1">
    <location>
        <begin position="228"/>
        <end position="254"/>
    </location>
</feature>
<comment type="function">
    <text evidence="1">Bifunctional enzyme with both catalase and broad-spectrum peroxidase activity.</text>
</comment>
<comment type="catalytic activity">
    <reaction evidence="1">
        <text>H2O2 + AH2 = A + 2 H2O</text>
        <dbReference type="Rhea" id="RHEA:30275"/>
        <dbReference type="ChEBI" id="CHEBI:13193"/>
        <dbReference type="ChEBI" id="CHEBI:15377"/>
        <dbReference type="ChEBI" id="CHEBI:16240"/>
        <dbReference type="ChEBI" id="CHEBI:17499"/>
        <dbReference type="EC" id="1.11.1.21"/>
    </reaction>
</comment>
<comment type="catalytic activity">
    <reaction evidence="1">
        <text>2 H2O2 = O2 + 2 H2O</text>
        <dbReference type="Rhea" id="RHEA:20309"/>
        <dbReference type="ChEBI" id="CHEBI:15377"/>
        <dbReference type="ChEBI" id="CHEBI:15379"/>
        <dbReference type="ChEBI" id="CHEBI:16240"/>
        <dbReference type="EC" id="1.11.1.21"/>
    </reaction>
</comment>
<comment type="cofactor">
    <cofactor evidence="1">
        <name>heme b</name>
        <dbReference type="ChEBI" id="CHEBI:60344"/>
    </cofactor>
    <text evidence="1">Binds 1 heme b (iron(II)-protoporphyrin IX) group per dimer.</text>
</comment>
<comment type="subunit">
    <text evidence="1">Homodimer or homotetramer.</text>
</comment>
<comment type="PTM">
    <text evidence="1">Formation of the three residue Trp-Tyr-Met cross-link is important for the catalase, but not the peroxidase activity of the enzyme.</text>
</comment>
<comment type="similarity">
    <text evidence="1">Belongs to the peroxidase family. Peroxidase/catalase subfamily.</text>
</comment>
<reference key="1">
    <citation type="submission" date="2006-08" db="EMBL/GenBank/DDBJ databases">
        <title>Complete sequence of chromosome 3 of Burkholderia cepacia AMMD.</title>
        <authorList>
            <person name="Copeland A."/>
            <person name="Lucas S."/>
            <person name="Lapidus A."/>
            <person name="Barry K."/>
            <person name="Detter J.C."/>
            <person name="Glavina del Rio T."/>
            <person name="Hammon N."/>
            <person name="Israni S."/>
            <person name="Pitluck S."/>
            <person name="Bruce D."/>
            <person name="Chain P."/>
            <person name="Malfatti S."/>
            <person name="Shin M."/>
            <person name="Vergez L."/>
            <person name="Schmutz J."/>
            <person name="Larimer F."/>
            <person name="Land M."/>
            <person name="Hauser L."/>
            <person name="Kyrpides N."/>
            <person name="Kim E."/>
            <person name="Parke J."/>
            <person name="Coenye T."/>
            <person name="Konstantinidis K."/>
            <person name="Ramette A."/>
            <person name="Tiedje J."/>
            <person name="Richardson P."/>
        </authorList>
    </citation>
    <scope>NUCLEOTIDE SEQUENCE [LARGE SCALE GENOMIC DNA]</scope>
    <source>
        <strain>ATCC BAA-244 / DSM 16087 / CCUG 44356 / LMG 19182 / AMMD</strain>
    </source>
</reference>
<sequence>MQKKRVGKSVVAALAIIAMSAGTVAAWADGAPRTNDFWWPERLDLSPLRQHDVESNPYGKDFDYAQAFNKLDIEAVKKDIRATLTTSQDWWPADYGNYGPFFIRMAWHGAGTYRTYDGRGGAGGAQQRFEPLNSWPDNANLDKARRLLWPIKKKYGENISWGDLMVLTGNVALESMGFQTFGFGGGREDDWQSDLVYWGAGTKFMSNNRDKNGKLEKPLAATQMGLIYVNPEGPNGNPDPVAAAKDIRDAFGRMAMNDEETLALIAGGHTFGKAHGAASPDKCVGAAPAGAGVEAQGLGWANKCGTGKGADTITSGLEGAWSVDPVHFTMQYLDNLLEHDWVLTKSPAGAHQWMPKDAQDIVPDAHDPSKRHPLMMFTTDIALKVDPAYSAIAKRFHAHPEEFKLAFAKAWFKLTHRDLGPKARYLGKDVPKVDLIWQDPLPVAGYQMIGDADIAELKRRILASGVPKAELIKTAWASAASFRATDYRGGANGARIRLAPENDWAVNDPASLSKVLKSLEGIQSGFNRNRTDGKQVSLADLIVLGGSAAVEDAARKAGYDVKVPFSPGRVDATQAQTDVASFAVLEPTADGFRNYYQKSNERSPAELMVDRASKLDLTVPEMTVLVGGLRALDANAGHSRLGVLTNRPGTLSNDFFVNLLDMSTQWTKSSSADGTYEGRDRKTGALKWTASPVDLVFGSSSELRAVAEVYASDDAHEKFVRDFVQAWTKVMNLDRFDLKRS</sequence>
<proteinExistence type="inferred from homology"/>
<name>KATG2_BURCM</name>
<dbReference type="EC" id="1.11.1.21" evidence="1"/>
<dbReference type="EMBL" id="CP000442">
    <property type="protein sequence ID" value="ABI91388.1"/>
    <property type="molecule type" value="Genomic_DNA"/>
</dbReference>
<dbReference type="SMR" id="Q0B385"/>
<dbReference type="PeroxiBase" id="2702">
    <property type="entry name" value="BamCP02"/>
</dbReference>
<dbReference type="KEGG" id="bam:Bamb_5842"/>
<dbReference type="PATRIC" id="fig|339670.21.peg.6795"/>
<dbReference type="eggNOG" id="COG0376">
    <property type="taxonomic scope" value="Bacteria"/>
</dbReference>
<dbReference type="Proteomes" id="UP000000662">
    <property type="component" value="Chromosome 3"/>
</dbReference>
<dbReference type="GO" id="GO:0005829">
    <property type="term" value="C:cytosol"/>
    <property type="evidence" value="ECO:0007669"/>
    <property type="project" value="TreeGrafter"/>
</dbReference>
<dbReference type="GO" id="GO:0004096">
    <property type="term" value="F:catalase activity"/>
    <property type="evidence" value="ECO:0007669"/>
    <property type="project" value="UniProtKB-UniRule"/>
</dbReference>
<dbReference type="GO" id="GO:0020037">
    <property type="term" value="F:heme binding"/>
    <property type="evidence" value="ECO:0007669"/>
    <property type="project" value="InterPro"/>
</dbReference>
<dbReference type="GO" id="GO:0046872">
    <property type="term" value="F:metal ion binding"/>
    <property type="evidence" value="ECO:0007669"/>
    <property type="project" value="UniProtKB-KW"/>
</dbReference>
<dbReference type="GO" id="GO:0070301">
    <property type="term" value="P:cellular response to hydrogen peroxide"/>
    <property type="evidence" value="ECO:0007669"/>
    <property type="project" value="TreeGrafter"/>
</dbReference>
<dbReference type="GO" id="GO:0042744">
    <property type="term" value="P:hydrogen peroxide catabolic process"/>
    <property type="evidence" value="ECO:0007669"/>
    <property type="project" value="UniProtKB-KW"/>
</dbReference>
<dbReference type="CDD" id="cd08200">
    <property type="entry name" value="catalase_peroxidase_2"/>
    <property type="match status" value="1"/>
</dbReference>
<dbReference type="FunFam" id="1.10.420.10:FF:000002">
    <property type="entry name" value="Catalase-peroxidase"/>
    <property type="match status" value="1"/>
</dbReference>
<dbReference type="FunFam" id="1.10.420.10:FF:000004">
    <property type="entry name" value="Catalase-peroxidase"/>
    <property type="match status" value="1"/>
</dbReference>
<dbReference type="FunFam" id="1.10.520.10:FF:000002">
    <property type="entry name" value="Catalase-peroxidase"/>
    <property type="match status" value="1"/>
</dbReference>
<dbReference type="Gene3D" id="1.10.520.10">
    <property type="match status" value="2"/>
</dbReference>
<dbReference type="Gene3D" id="1.10.420.10">
    <property type="entry name" value="Peroxidase, domain 2"/>
    <property type="match status" value="2"/>
</dbReference>
<dbReference type="HAMAP" id="MF_01961">
    <property type="entry name" value="Catal_peroxid"/>
    <property type="match status" value="1"/>
</dbReference>
<dbReference type="InterPro" id="IPR000763">
    <property type="entry name" value="Catalase_peroxidase"/>
</dbReference>
<dbReference type="InterPro" id="IPR002016">
    <property type="entry name" value="Haem_peroxidase"/>
</dbReference>
<dbReference type="InterPro" id="IPR010255">
    <property type="entry name" value="Haem_peroxidase_sf"/>
</dbReference>
<dbReference type="InterPro" id="IPR019794">
    <property type="entry name" value="Peroxidases_AS"/>
</dbReference>
<dbReference type="InterPro" id="IPR019793">
    <property type="entry name" value="Peroxidases_heam-ligand_BS"/>
</dbReference>
<dbReference type="NCBIfam" id="TIGR00198">
    <property type="entry name" value="cat_per_HPI"/>
    <property type="match status" value="1"/>
</dbReference>
<dbReference type="NCBIfam" id="NF011635">
    <property type="entry name" value="PRK15061.1"/>
    <property type="match status" value="1"/>
</dbReference>
<dbReference type="PANTHER" id="PTHR30555:SF0">
    <property type="entry name" value="CATALASE-PEROXIDASE"/>
    <property type="match status" value="1"/>
</dbReference>
<dbReference type="PANTHER" id="PTHR30555">
    <property type="entry name" value="HYDROPEROXIDASE I, BIFUNCTIONAL CATALASE-PEROXIDASE"/>
    <property type="match status" value="1"/>
</dbReference>
<dbReference type="Pfam" id="PF00141">
    <property type="entry name" value="peroxidase"/>
    <property type="match status" value="2"/>
</dbReference>
<dbReference type="PRINTS" id="PR00460">
    <property type="entry name" value="BPEROXIDASE"/>
</dbReference>
<dbReference type="PRINTS" id="PR00458">
    <property type="entry name" value="PEROXIDASE"/>
</dbReference>
<dbReference type="SUPFAM" id="SSF48113">
    <property type="entry name" value="Heme-dependent peroxidases"/>
    <property type="match status" value="2"/>
</dbReference>
<dbReference type="PROSITE" id="PS00435">
    <property type="entry name" value="PEROXIDASE_1"/>
    <property type="match status" value="1"/>
</dbReference>
<dbReference type="PROSITE" id="PS00436">
    <property type="entry name" value="PEROXIDASE_2"/>
    <property type="match status" value="1"/>
</dbReference>
<dbReference type="PROSITE" id="PS50873">
    <property type="entry name" value="PEROXIDASE_4"/>
    <property type="match status" value="1"/>
</dbReference>
<keyword id="KW-0349">Heme</keyword>
<keyword id="KW-0376">Hydrogen peroxide</keyword>
<keyword id="KW-0408">Iron</keyword>
<keyword id="KW-0479">Metal-binding</keyword>
<keyword id="KW-0560">Oxidoreductase</keyword>
<keyword id="KW-0575">Peroxidase</keyword>
<keyword id="KW-0732">Signal</keyword>
<accession>Q0B385</accession>